<organism>
    <name type="scientific">Photobacterium profundum (strain SS9)</name>
    <dbReference type="NCBI Taxonomy" id="298386"/>
    <lineage>
        <taxon>Bacteria</taxon>
        <taxon>Pseudomonadati</taxon>
        <taxon>Pseudomonadota</taxon>
        <taxon>Gammaproteobacteria</taxon>
        <taxon>Vibrionales</taxon>
        <taxon>Vibrionaceae</taxon>
        <taxon>Photobacterium</taxon>
    </lineage>
</organism>
<gene>
    <name evidence="1" type="primary">acsA</name>
    <name type="ordered locus">PBPRA3403</name>
</gene>
<name>ACSA_PHOPR</name>
<keyword id="KW-0007">Acetylation</keyword>
<keyword id="KW-0067">ATP-binding</keyword>
<keyword id="KW-0436">Ligase</keyword>
<keyword id="KW-0460">Magnesium</keyword>
<keyword id="KW-0479">Metal-binding</keyword>
<keyword id="KW-0547">Nucleotide-binding</keyword>
<keyword id="KW-1185">Reference proteome</keyword>
<evidence type="ECO:0000255" key="1">
    <source>
        <dbReference type="HAMAP-Rule" id="MF_01123"/>
    </source>
</evidence>
<proteinExistence type="inferred from homology"/>
<accession>Q6LLZ1</accession>
<comment type="function">
    <text evidence="1">Catalyzes the conversion of acetate into acetyl-CoA (AcCoA), an essential intermediate at the junction of anabolic and catabolic pathways. AcsA undergoes a two-step reaction. In the first half reaction, AcsA combines acetate with ATP to form acetyl-adenylate (AcAMP) intermediate. In the second half reaction, it can then transfer the acetyl group from AcAMP to the sulfhydryl group of CoA, forming the product AcCoA.</text>
</comment>
<comment type="catalytic activity">
    <reaction evidence="1">
        <text>acetate + ATP + CoA = acetyl-CoA + AMP + diphosphate</text>
        <dbReference type="Rhea" id="RHEA:23176"/>
        <dbReference type="ChEBI" id="CHEBI:30089"/>
        <dbReference type="ChEBI" id="CHEBI:30616"/>
        <dbReference type="ChEBI" id="CHEBI:33019"/>
        <dbReference type="ChEBI" id="CHEBI:57287"/>
        <dbReference type="ChEBI" id="CHEBI:57288"/>
        <dbReference type="ChEBI" id="CHEBI:456215"/>
        <dbReference type="EC" id="6.2.1.1"/>
    </reaction>
</comment>
<comment type="cofactor">
    <cofactor evidence="1">
        <name>Mg(2+)</name>
        <dbReference type="ChEBI" id="CHEBI:18420"/>
    </cofactor>
</comment>
<comment type="PTM">
    <text evidence="1">Acetylated. Deacetylation by the SIR2-homolog deacetylase activates the enzyme.</text>
</comment>
<comment type="similarity">
    <text evidence="1">Belongs to the ATP-dependent AMP-binding enzyme family.</text>
</comment>
<reference key="1">
    <citation type="journal article" date="2005" name="Science">
        <title>Life at depth: Photobacterium profundum genome sequence and expression analysis.</title>
        <authorList>
            <person name="Vezzi A."/>
            <person name="Campanaro S."/>
            <person name="D'Angelo M."/>
            <person name="Simonato F."/>
            <person name="Vitulo N."/>
            <person name="Lauro F.M."/>
            <person name="Cestaro A."/>
            <person name="Malacrida G."/>
            <person name="Simionati B."/>
            <person name="Cannata N."/>
            <person name="Romualdi C."/>
            <person name="Bartlett D.H."/>
            <person name="Valle G."/>
        </authorList>
    </citation>
    <scope>NUCLEOTIDE SEQUENCE [LARGE SCALE GENOMIC DNA]</scope>
    <source>
        <strain>ATCC BAA-1253 / SS9</strain>
    </source>
</reference>
<feature type="chain" id="PRO_1000065302" description="Acetyl-coenzyme A synthetase">
    <location>
        <begin position="1"/>
        <end position="649"/>
    </location>
</feature>
<feature type="binding site" evidence="1">
    <location>
        <begin position="191"/>
        <end position="194"/>
    </location>
    <ligand>
        <name>CoA</name>
        <dbReference type="ChEBI" id="CHEBI:57287"/>
    </ligand>
</feature>
<feature type="binding site" evidence="1">
    <location>
        <position position="311"/>
    </location>
    <ligand>
        <name>CoA</name>
        <dbReference type="ChEBI" id="CHEBI:57287"/>
    </ligand>
</feature>
<feature type="binding site" evidence="1">
    <location>
        <position position="335"/>
    </location>
    <ligand>
        <name>CoA</name>
        <dbReference type="ChEBI" id="CHEBI:57287"/>
    </ligand>
</feature>
<feature type="binding site" evidence="1">
    <location>
        <begin position="387"/>
        <end position="389"/>
    </location>
    <ligand>
        <name>ATP</name>
        <dbReference type="ChEBI" id="CHEBI:30616"/>
    </ligand>
</feature>
<feature type="binding site" evidence="1">
    <location>
        <begin position="411"/>
        <end position="416"/>
    </location>
    <ligand>
        <name>ATP</name>
        <dbReference type="ChEBI" id="CHEBI:30616"/>
    </ligand>
</feature>
<feature type="binding site" evidence="1">
    <location>
        <position position="500"/>
    </location>
    <ligand>
        <name>ATP</name>
        <dbReference type="ChEBI" id="CHEBI:30616"/>
    </ligand>
</feature>
<feature type="binding site" evidence="1">
    <location>
        <position position="515"/>
    </location>
    <ligand>
        <name>ATP</name>
        <dbReference type="ChEBI" id="CHEBI:30616"/>
    </ligand>
</feature>
<feature type="binding site" evidence="1">
    <location>
        <position position="523"/>
    </location>
    <ligand>
        <name>CoA</name>
        <dbReference type="ChEBI" id="CHEBI:57287"/>
    </ligand>
</feature>
<feature type="binding site" evidence="1">
    <location>
        <position position="526"/>
    </location>
    <ligand>
        <name>ATP</name>
        <dbReference type="ChEBI" id="CHEBI:30616"/>
    </ligand>
</feature>
<feature type="binding site" evidence="1">
    <location>
        <position position="537"/>
    </location>
    <ligand>
        <name>Mg(2+)</name>
        <dbReference type="ChEBI" id="CHEBI:18420"/>
    </ligand>
</feature>
<feature type="binding site" evidence="1">
    <location>
        <position position="539"/>
    </location>
    <ligand>
        <name>Mg(2+)</name>
        <dbReference type="ChEBI" id="CHEBI:18420"/>
    </ligand>
</feature>
<feature type="binding site" evidence="1">
    <location>
        <position position="542"/>
    </location>
    <ligand>
        <name>Mg(2+)</name>
        <dbReference type="ChEBI" id="CHEBI:18420"/>
    </ligand>
</feature>
<feature type="binding site" evidence="1">
    <location>
        <position position="584"/>
    </location>
    <ligand>
        <name>CoA</name>
        <dbReference type="ChEBI" id="CHEBI:57287"/>
    </ligand>
</feature>
<feature type="modified residue" description="N6-acetyllysine" evidence="1">
    <location>
        <position position="609"/>
    </location>
</feature>
<dbReference type="EC" id="6.2.1.1" evidence="1"/>
<dbReference type="EMBL" id="CR378674">
    <property type="protein sequence ID" value="CAG21687.1"/>
    <property type="molecule type" value="Genomic_DNA"/>
</dbReference>
<dbReference type="RefSeq" id="WP_011219932.1">
    <property type="nucleotide sequence ID" value="NC_006370.1"/>
</dbReference>
<dbReference type="SMR" id="Q6LLZ1"/>
<dbReference type="STRING" id="298386.PBPRA3403"/>
<dbReference type="KEGG" id="ppr:PBPRA3403"/>
<dbReference type="eggNOG" id="COG0365">
    <property type="taxonomic scope" value="Bacteria"/>
</dbReference>
<dbReference type="HOGENOM" id="CLU_000022_3_6_6"/>
<dbReference type="Proteomes" id="UP000000593">
    <property type="component" value="Chromosome 1"/>
</dbReference>
<dbReference type="GO" id="GO:0005829">
    <property type="term" value="C:cytosol"/>
    <property type="evidence" value="ECO:0007669"/>
    <property type="project" value="TreeGrafter"/>
</dbReference>
<dbReference type="GO" id="GO:0003987">
    <property type="term" value="F:acetate-CoA ligase activity"/>
    <property type="evidence" value="ECO:0007669"/>
    <property type="project" value="UniProtKB-UniRule"/>
</dbReference>
<dbReference type="GO" id="GO:0016208">
    <property type="term" value="F:AMP binding"/>
    <property type="evidence" value="ECO:0007669"/>
    <property type="project" value="InterPro"/>
</dbReference>
<dbReference type="GO" id="GO:0005524">
    <property type="term" value="F:ATP binding"/>
    <property type="evidence" value="ECO:0007669"/>
    <property type="project" value="UniProtKB-KW"/>
</dbReference>
<dbReference type="GO" id="GO:0046872">
    <property type="term" value="F:metal ion binding"/>
    <property type="evidence" value="ECO:0007669"/>
    <property type="project" value="UniProtKB-KW"/>
</dbReference>
<dbReference type="GO" id="GO:0019427">
    <property type="term" value="P:acetyl-CoA biosynthetic process from acetate"/>
    <property type="evidence" value="ECO:0007669"/>
    <property type="project" value="InterPro"/>
</dbReference>
<dbReference type="CDD" id="cd05966">
    <property type="entry name" value="ACS"/>
    <property type="match status" value="1"/>
</dbReference>
<dbReference type="FunFam" id="3.30.300.30:FF:000004">
    <property type="entry name" value="Acetyl-coenzyme A synthetase"/>
    <property type="match status" value="1"/>
</dbReference>
<dbReference type="FunFam" id="3.40.50.12780:FF:000001">
    <property type="entry name" value="Acetyl-coenzyme A synthetase"/>
    <property type="match status" value="1"/>
</dbReference>
<dbReference type="Gene3D" id="3.30.300.30">
    <property type="match status" value="1"/>
</dbReference>
<dbReference type="Gene3D" id="3.40.50.12780">
    <property type="entry name" value="N-terminal domain of ligase-like"/>
    <property type="match status" value="1"/>
</dbReference>
<dbReference type="HAMAP" id="MF_01123">
    <property type="entry name" value="Ac_CoA_synth"/>
    <property type="match status" value="1"/>
</dbReference>
<dbReference type="InterPro" id="IPR011904">
    <property type="entry name" value="Ac_CoA_lig"/>
</dbReference>
<dbReference type="InterPro" id="IPR032387">
    <property type="entry name" value="ACAS_N"/>
</dbReference>
<dbReference type="InterPro" id="IPR025110">
    <property type="entry name" value="AMP-bd_C"/>
</dbReference>
<dbReference type="InterPro" id="IPR045851">
    <property type="entry name" value="AMP-bd_C_sf"/>
</dbReference>
<dbReference type="InterPro" id="IPR020845">
    <property type="entry name" value="AMP-binding_CS"/>
</dbReference>
<dbReference type="InterPro" id="IPR000873">
    <property type="entry name" value="AMP-dep_synth/lig_dom"/>
</dbReference>
<dbReference type="InterPro" id="IPR042099">
    <property type="entry name" value="ANL_N_sf"/>
</dbReference>
<dbReference type="NCBIfam" id="TIGR02188">
    <property type="entry name" value="Ac_CoA_lig_AcsA"/>
    <property type="match status" value="1"/>
</dbReference>
<dbReference type="NCBIfam" id="NF001208">
    <property type="entry name" value="PRK00174.1"/>
    <property type="match status" value="1"/>
</dbReference>
<dbReference type="PANTHER" id="PTHR24095">
    <property type="entry name" value="ACETYL-COENZYME A SYNTHETASE"/>
    <property type="match status" value="1"/>
</dbReference>
<dbReference type="PANTHER" id="PTHR24095:SF243">
    <property type="entry name" value="ACETYL-COENZYME A SYNTHETASE"/>
    <property type="match status" value="1"/>
</dbReference>
<dbReference type="Pfam" id="PF16177">
    <property type="entry name" value="ACAS_N"/>
    <property type="match status" value="1"/>
</dbReference>
<dbReference type="Pfam" id="PF00501">
    <property type="entry name" value="AMP-binding"/>
    <property type="match status" value="1"/>
</dbReference>
<dbReference type="Pfam" id="PF13193">
    <property type="entry name" value="AMP-binding_C"/>
    <property type="match status" value="1"/>
</dbReference>
<dbReference type="SUPFAM" id="SSF56801">
    <property type="entry name" value="Acetyl-CoA synthetase-like"/>
    <property type="match status" value="1"/>
</dbReference>
<dbReference type="PROSITE" id="PS00455">
    <property type="entry name" value="AMP_BINDING"/>
    <property type="match status" value="1"/>
</dbReference>
<sequence length="649" mass="71594">MSEVHVYPVNQEIAATAHVNDEQYREMYQQSVINPEGFWREHGQIVDWIKPFTKVKHTSFDTGHVSVKWFEDGTLNVSANCIDRHLATRGDQPAIIWEGDDPTDDATFTYNELHEQVCKFSNALKSQGVRKGDVVCLYMPMVAEAAIAMLACTRIGAVHTIVFGGFSPEALAGRIVDSNAKLVITADEGVRAGRAVPLKKNVDDALANKNVTSIEKVIVLKRTGGNVEWHSERDVWWHEATAVASSHCEPEEMNAEDPLFILYTSGSTGKPKGVLHTTGGYLVYATMTFKYVFDYQEGDVYWCTADVGWITGHSYLVYGPLANGATTVLFEGVPNYPSTSRMSEVVDKHNVSILYTAPTAIRALMAKGTEAIKGTSRSSLRIMGSVGEPINPEAWEWYHHTIGDSRCPIVDTWWQTETGGILITPLPGATALKPGSATRPFFGVQPAIVDNMGNILEGVAEGNLVMVDSWPGQMRTLWGDHERFEQTYFSTFQGMYFTGDGARRDEDGYYWITGRVDDVLNISGHRMGTAEIESALVAFDKIAEAAIVGVPHDIKGQAIYAYITLNDGEIPSAELHKEVKDWVRKEIGPIATPDFLHWTDALPKTRSGKIMRRILRKIATGDTGSLGDTSTLADPSVVDKLIAEKQTIL</sequence>
<protein>
    <recommendedName>
        <fullName evidence="1">Acetyl-coenzyme A synthetase</fullName>
        <shortName evidence="1">AcCoA synthetase</shortName>
        <shortName evidence="1">Acs</shortName>
        <ecNumber evidence="1">6.2.1.1</ecNumber>
    </recommendedName>
    <alternativeName>
        <fullName evidence="1">Acetate--CoA ligase</fullName>
    </alternativeName>
    <alternativeName>
        <fullName evidence="1">Acyl-activating enzyme</fullName>
    </alternativeName>
</protein>